<feature type="chain" id="PRO_1000090852" description="Cysteine--tRNA ligase">
    <location>
        <begin position="1"/>
        <end position="476"/>
    </location>
</feature>
<feature type="short sequence motif" description="'HIGH' region">
    <location>
        <begin position="30"/>
        <end position="40"/>
    </location>
</feature>
<feature type="short sequence motif" description="'KMSKS' region">
    <location>
        <begin position="265"/>
        <end position="269"/>
    </location>
</feature>
<feature type="binding site" evidence="1">
    <location>
        <position position="28"/>
    </location>
    <ligand>
        <name>Zn(2+)</name>
        <dbReference type="ChEBI" id="CHEBI:29105"/>
    </ligand>
</feature>
<feature type="binding site" evidence="1">
    <location>
        <position position="208"/>
    </location>
    <ligand>
        <name>Zn(2+)</name>
        <dbReference type="ChEBI" id="CHEBI:29105"/>
    </ligand>
</feature>
<feature type="binding site" evidence="1">
    <location>
        <position position="233"/>
    </location>
    <ligand>
        <name>Zn(2+)</name>
        <dbReference type="ChEBI" id="CHEBI:29105"/>
    </ligand>
</feature>
<feature type="binding site" evidence="1">
    <location>
        <position position="237"/>
    </location>
    <ligand>
        <name>Zn(2+)</name>
        <dbReference type="ChEBI" id="CHEBI:29105"/>
    </ligand>
</feature>
<feature type="binding site" evidence="1">
    <location>
        <position position="268"/>
    </location>
    <ligand>
        <name>ATP</name>
        <dbReference type="ChEBI" id="CHEBI:30616"/>
    </ligand>
</feature>
<accession>A9AAN8</accession>
<organism>
    <name type="scientific">Methanococcus maripaludis (strain C6 / ATCC BAA-1332)</name>
    <dbReference type="NCBI Taxonomy" id="444158"/>
    <lineage>
        <taxon>Archaea</taxon>
        <taxon>Methanobacteriati</taxon>
        <taxon>Methanobacteriota</taxon>
        <taxon>Methanomada group</taxon>
        <taxon>Methanococci</taxon>
        <taxon>Methanococcales</taxon>
        <taxon>Methanococcaceae</taxon>
        <taxon>Methanococcus</taxon>
    </lineage>
</organism>
<comment type="catalytic activity">
    <reaction evidence="1">
        <text>tRNA(Cys) + L-cysteine + ATP = L-cysteinyl-tRNA(Cys) + AMP + diphosphate</text>
        <dbReference type="Rhea" id="RHEA:17773"/>
        <dbReference type="Rhea" id="RHEA-COMP:9661"/>
        <dbReference type="Rhea" id="RHEA-COMP:9679"/>
        <dbReference type="ChEBI" id="CHEBI:30616"/>
        <dbReference type="ChEBI" id="CHEBI:33019"/>
        <dbReference type="ChEBI" id="CHEBI:35235"/>
        <dbReference type="ChEBI" id="CHEBI:78442"/>
        <dbReference type="ChEBI" id="CHEBI:78517"/>
        <dbReference type="ChEBI" id="CHEBI:456215"/>
        <dbReference type="EC" id="6.1.1.16"/>
    </reaction>
</comment>
<comment type="cofactor">
    <cofactor evidence="1">
        <name>Zn(2+)</name>
        <dbReference type="ChEBI" id="CHEBI:29105"/>
    </cofactor>
    <text evidence="1">Binds 1 zinc ion per subunit.</text>
</comment>
<comment type="subcellular location">
    <subcellularLocation>
        <location evidence="1">Cytoplasm</location>
    </subcellularLocation>
</comment>
<comment type="similarity">
    <text evidence="1">Belongs to the class-I aminoacyl-tRNA synthetase family.</text>
</comment>
<keyword id="KW-0030">Aminoacyl-tRNA synthetase</keyword>
<keyword id="KW-0067">ATP-binding</keyword>
<keyword id="KW-0963">Cytoplasm</keyword>
<keyword id="KW-0436">Ligase</keyword>
<keyword id="KW-0479">Metal-binding</keyword>
<keyword id="KW-0547">Nucleotide-binding</keyword>
<keyword id="KW-0648">Protein biosynthesis</keyword>
<keyword id="KW-0862">Zinc</keyword>
<evidence type="ECO:0000255" key="1">
    <source>
        <dbReference type="HAMAP-Rule" id="MF_00041"/>
    </source>
</evidence>
<proteinExistence type="inferred from homology"/>
<reference key="1">
    <citation type="submission" date="2007-10" db="EMBL/GenBank/DDBJ databases">
        <title>Complete sequence of Methanococcus maripaludis C6.</title>
        <authorList>
            <consortium name="US DOE Joint Genome Institute"/>
            <person name="Copeland A."/>
            <person name="Lucas S."/>
            <person name="Lapidus A."/>
            <person name="Barry K."/>
            <person name="Glavina del Rio T."/>
            <person name="Dalin E."/>
            <person name="Tice H."/>
            <person name="Pitluck S."/>
            <person name="Clum A."/>
            <person name="Schmutz J."/>
            <person name="Larimer F."/>
            <person name="Land M."/>
            <person name="Hauser L."/>
            <person name="Kyrpides N."/>
            <person name="Mikhailova N."/>
            <person name="Sieprawska-Lupa M."/>
            <person name="Whitman W.B."/>
            <person name="Richardson P."/>
        </authorList>
    </citation>
    <scope>NUCLEOTIDE SEQUENCE [LARGE SCALE GENOMIC DNA]</scope>
    <source>
        <strain>C6 / ATCC BAA-1332</strain>
    </source>
</reference>
<name>SYC_METM6</name>
<dbReference type="EC" id="6.1.1.16" evidence="1"/>
<dbReference type="EMBL" id="CP000867">
    <property type="protein sequence ID" value="ABX02411.1"/>
    <property type="molecule type" value="Genomic_DNA"/>
</dbReference>
<dbReference type="SMR" id="A9AAN8"/>
<dbReference type="STRING" id="444158.MmarC6_1599"/>
<dbReference type="KEGG" id="mmx:MmarC6_1599"/>
<dbReference type="eggNOG" id="arCOG00486">
    <property type="taxonomic scope" value="Archaea"/>
</dbReference>
<dbReference type="HOGENOM" id="CLU_013528_0_1_2"/>
<dbReference type="OrthoDB" id="9445at2157"/>
<dbReference type="PhylomeDB" id="A9AAN8"/>
<dbReference type="GO" id="GO:0005737">
    <property type="term" value="C:cytoplasm"/>
    <property type="evidence" value="ECO:0007669"/>
    <property type="project" value="UniProtKB-SubCell"/>
</dbReference>
<dbReference type="GO" id="GO:0005524">
    <property type="term" value="F:ATP binding"/>
    <property type="evidence" value="ECO:0007669"/>
    <property type="project" value="UniProtKB-UniRule"/>
</dbReference>
<dbReference type="GO" id="GO:0004817">
    <property type="term" value="F:cysteine-tRNA ligase activity"/>
    <property type="evidence" value="ECO:0007669"/>
    <property type="project" value="UniProtKB-UniRule"/>
</dbReference>
<dbReference type="GO" id="GO:0008270">
    <property type="term" value="F:zinc ion binding"/>
    <property type="evidence" value="ECO:0007669"/>
    <property type="project" value="UniProtKB-UniRule"/>
</dbReference>
<dbReference type="GO" id="GO:0006423">
    <property type="term" value="P:cysteinyl-tRNA aminoacylation"/>
    <property type="evidence" value="ECO:0007669"/>
    <property type="project" value="UniProtKB-UniRule"/>
</dbReference>
<dbReference type="CDD" id="cd00672">
    <property type="entry name" value="CysRS_core"/>
    <property type="match status" value="1"/>
</dbReference>
<dbReference type="FunFam" id="3.40.50.620:FF:000009">
    <property type="entry name" value="Cysteine--tRNA ligase"/>
    <property type="match status" value="1"/>
</dbReference>
<dbReference type="Gene3D" id="1.20.120.1910">
    <property type="entry name" value="Cysteine-tRNA ligase, C-terminal anti-codon recognition domain"/>
    <property type="match status" value="1"/>
</dbReference>
<dbReference type="Gene3D" id="3.40.50.620">
    <property type="entry name" value="HUPs"/>
    <property type="match status" value="1"/>
</dbReference>
<dbReference type="HAMAP" id="MF_00041">
    <property type="entry name" value="Cys_tRNA_synth"/>
    <property type="match status" value="1"/>
</dbReference>
<dbReference type="InterPro" id="IPR015803">
    <property type="entry name" value="Cys-tRNA-ligase"/>
</dbReference>
<dbReference type="InterPro" id="IPR015273">
    <property type="entry name" value="Cys-tRNA-synt_Ia_DALR"/>
</dbReference>
<dbReference type="InterPro" id="IPR024909">
    <property type="entry name" value="Cys-tRNA/MSH_ligase"/>
</dbReference>
<dbReference type="InterPro" id="IPR014729">
    <property type="entry name" value="Rossmann-like_a/b/a_fold"/>
</dbReference>
<dbReference type="InterPro" id="IPR032678">
    <property type="entry name" value="tRNA-synt_1_cat_dom"/>
</dbReference>
<dbReference type="InterPro" id="IPR009080">
    <property type="entry name" value="tRNAsynth_Ia_anticodon-bd"/>
</dbReference>
<dbReference type="NCBIfam" id="TIGR00435">
    <property type="entry name" value="cysS"/>
    <property type="match status" value="1"/>
</dbReference>
<dbReference type="PANTHER" id="PTHR10890:SF3">
    <property type="entry name" value="CYSTEINE--TRNA LIGASE, CYTOPLASMIC"/>
    <property type="match status" value="1"/>
</dbReference>
<dbReference type="PANTHER" id="PTHR10890">
    <property type="entry name" value="CYSTEINYL-TRNA SYNTHETASE"/>
    <property type="match status" value="1"/>
</dbReference>
<dbReference type="Pfam" id="PF09190">
    <property type="entry name" value="DALR_2"/>
    <property type="match status" value="1"/>
</dbReference>
<dbReference type="Pfam" id="PF01406">
    <property type="entry name" value="tRNA-synt_1e"/>
    <property type="match status" value="1"/>
</dbReference>
<dbReference type="PRINTS" id="PR00983">
    <property type="entry name" value="TRNASYNTHCYS"/>
</dbReference>
<dbReference type="SMART" id="SM00840">
    <property type="entry name" value="DALR_2"/>
    <property type="match status" value="1"/>
</dbReference>
<dbReference type="SUPFAM" id="SSF47323">
    <property type="entry name" value="Anticodon-binding domain of a subclass of class I aminoacyl-tRNA synthetases"/>
    <property type="match status" value="1"/>
</dbReference>
<dbReference type="SUPFAM" id="SSF52374">
    <property type="entry name" value="Nucleotidylyl transferase"/>
    <property type="match status" value="1"/>
</dbReference>
<gene>
    <name evidence="1" type="primary">cysS</name>
    <name type="ordered locus">MmarC6_1599</name>
</gene>
<sequence length="476" mass="55444">MLKVYNTLTRKEEEFKPLNEKEVKMYVCGPTVYDHTHLGHGRTYVSFDIIRRYLEHIGYTVNLVINFTDIDDKIIKRANENGKNPKELSEQFITVFLNDMTTLKVKPADIYPKVTEHIPEIIAFIEKLIEKGFAYETENGVYFEVKKFENYGKLSNINLEDLFSGVRIETSEEKKNPEDFALWKTAKPGEPKWKSPFVEGRPGWHIECSAMSSKYLGEQFDIHGGGRDLSFPHHENEIAQSVAYSGKDWVNYWLHTGFVMVNGEKMSKSLGNFVTIEGISKEYDPEILRFFFIQRHYRSPIDYTAESITHVKNNLEKIYNVIENIRISLEKSEKSRVWGENEVLLYDILKNSKRNFYEAMNSDFNTVEALKSVFEVSNGVNKYLSLVKTPSEGLLLKAFDFFKIVGEIFGLFENYFKTSSESDDEEFIKFLIELRSDLRLQKNYEMSDKIRDGLKNLGYQIEDNPKEGTVFKKINI</sequence>
<protein>
    <recommendedName>
        <fullName evidence="1">Cysteine--tRNA ligase</fullName>
        <ecNumber evidence="1">6.1.1.16</ecNumber>
    </recommendedName>
    <alternativeName>
        <fullName evidence="1">Cysteinyl-tRNA synthetase</fullName>
        <shortName evidence="1">CysRS</shortName>
    </alternativeName>
</protein>